<name>HEM1_CITBB</name>
<organism>
    <name type="scientific">Citrifermentans bemidjiense (strain ATCC BAA-1014 / DSM 16622 / JCM 12645 / Bem)</name>
    <name type="common">Geobacter bemidjiensis</name>
    <dbReference type="NCBI Taxonomy" id="404380"/>
    <lineage>
        <taxon>Bacteria</taxon>
        <taxon>Pseudomonadati</taxon>
        <taxon>Thermodesulfobacteriota</taxon>
        <taxon>Desulfuromonadia</taxon>
        <taxon>Geobacterales</taxon>
        <taxon>Geobacteraceae</taxon>
        <taxon>Citrifermentans</taxon>
    </lineage>
</organism>
<gene>
    <name evidence="1" type="primary">hemA</name>
    <name type="ordered locus">Gbem_0407</name>
</gene>
<proteinExistence type="inferred from homology"/>
<sequence>MNIIVVGLSHKTAAVEIREKVAFAPTQMEKPLQAVVALPDITEAVIVSTCNRVEIYATTRDVAGGMARIKRFLADYHNVPLELLEKHLYSYHGEDATRHVFRVASSLDSMVVGEPQILGQIKTSYGYAAEYKSSGIILNRFLHKAFSVAKRVRTETKIASSAVSVAFAAVELAKKIFGELSDKTVLLIGAGEMCELAAKHFINTGVRGVMVTNRTYERAEKLAEEFDAKPVHFEALMETLPKADIILSSTGAPHFIIHEKDMEEVLRRRKHKPMFFIDIAVPRDIDPKVNNVENCYLYTVDDLNGVVATNLEQRKVEAAKAEAIVEQEIGQFFKWLSSLEVTPTIVALRTHFDEIRKAELSKTISGWKDLPPGAEKKLDALTNAIMNKLLHQPTSVLKRIDQGNRNDLYVDALRNLFDLEVGGESQDNMMELED</sequence>
<comment type="function">
    <text evidence="1">Catalyzes the NADPH-dependent reduction of glutamyl-tRNA(Glu) to glutamate 1-semialdehyde (GSA).</text>
</comment>
<comment type="catalytic activity">
    <reaction evidence="1">
        <text>(S)-4-amino-5-oxopentanoate + tRNA(Glu) + NADP(+) = L-glutamyl-tRNA(Glu) + NADPH + H(+)</text>
        <dbReference type="Rhea" id="RHEA:12344"/>
        <dbReference type="Rhea" id="RHEA-COMP:9663"/>
        <dbReference type="Rhea" id="RHEA-COMP:9680"/>
        <dbReference type="ChEBI" id="CHEBI:15378"/>
        <dbReference type="ChEBI" id="CHEBI:57501"/>
        <dbReference type="ChEBI" id="CHEBI:57783"/>
        <dbReference type="ChEBI" id="CHEBI:58349"/>
        <dbReference type="ChEBI" id="CHEBI:78442"/>
        <dbReference type="ChEBI" id="CHEBI:78520"/>
        <dbReference type="EC" id="1.2.1.70"/>
    </reaction>
</comment>
<comment type="pathway">
    <text evidence="1">Porphyrin-containing compound metabolism; protoporphyrin-IX biosynthesis; 5-aminolevulinate from L-glutamyl-tRNA(Glu): step 1/2.</text>
</comment>
<comment type="subunit">
    <text evidence="1">Homodimer.</text>
</comment>
<comment type="domain">
    <text evidence="1">Possesses an unusual extended V-shaped dimeric structure with each monomer consisting of three distinct domains arranged along a curved 'spinal' alpha-helix. The N-terminal catalytic domain specifically recognizes the glutamate moiety of the substrate. The second domain is the NADPH-binding domain, and the third C-terminal domain is responsible for dimerization.</text>
</comment>
<comment type="miscellaneous">
    <text evidence="1">During catalysis, the active site Cys acts as a nucleophile attacking the alpha-carbonyl group of tRNA-bound glutamate with the formation of a thioester intermediate between enzyme and glutamate, and the concomitant release of tRNA(Glu). The thioester intermediate is finally reduced by direct hydride transfer from NADPH, to form the product GSA.</text>
</comment>
<comment type="similarity">
    <text evidence="1">Belongs to the glutamyl-tRNA reductase family.</text>
</comment>
<feature type="chain" id="PRO_1000093139" description="Glutamyl-tRNA reductase">
    <location>
        <begin position="1"/>
        <end position="434"/>
    </location>
</feature>
<feature type="active site" description="Nucleophile" evidence="1">
    <location>
        <position position="50"/>
    </location>
</feature>
<feature type="binding site" evidence="1">
    <location>
        <begin position="49"/>
        <end position="52"/>
    </location>
    <ligand>
        <name>substrate</name>
    </ligand>
</feature>
<feature type="binding site" evidence="1">
    <location>
        <position position="109"/>
    </location>
    <ligand>
        <name>substrate</name>
    </ligand>
</feature>
<feature type="binding site" evidence="1">
    <location>
        <begin position="114"/>
        <end position="116"/>
    </location>
    <ligand>
        <name>substrate</name>
    </ligand>
</feature>
<feature type="binding site" evidence="1">
    <location>
        <position position="120"/>
    </location>
    <ligand>
        <name>substrate</name>
    </ligand>
</feature>
<feature type="binding site" evidence="1">
    <location>
        <begin position="189"/>
        <end position="194"/>
    </location>
    <ligand>
        <name>NADP(+)</name>
        <dbReference type="ChEBI" id="CHEBI:58349"/>
    </ligand>
</feature>
<feature type="site" description="Important for activity" evidence="1">
    <location>
        <position position="99"/>
    </location>
</feature>
<protein>
    <recommendedName>
        <fullName evidence="1">Glutamyl-tRNA reductase</fullName>
        <shortName evidence="1">GluTR</shortName>
        <ecNumber evidence="1">1.2.1.70</ecNumber>
    </recommendedName>
</protein>
<reference key="1">
    <citation type="submission" date="2008-07" db="EMBL/GenBank/DDBJ databases">
        <title>Complete sequence of Geobacter bemidjiensis BEM.</title>
        <authorList>
            <consortium name="US DOE Joint Genome Institute"/>
            <person name="Lucas S."/>
            <person name="Copeland A."/>
            <person name="Lapidus A."/>
            <person name="Glavina del Rio T."/>
            <person name="Dalin E."/>
            <person name="Tice H."/>
            <person name="Bruce D."/>
            <person name="Goodwin L."/>
            <person name="Pitluck S."/>
            <person name="Kiss H."/>
            <person name="Brettin T."/>
            <person name="Detter J.C."/>
            <person name="Han C."/>
            <person name="Kuske C.R."/>
            <person name="Schmutz J."/>
            <person name="Larimer F."/>
            <person name="Land M."/>
            <person name="Hauser L."/>
            <person name="Kyrpides N."/>
            <person name="Lykidis A."/>
            <person name="Lovley D."/>
            <person name="Richardson P."/>
        </authorList>
    </citation>
    <scope>NUCLEOTIDE SEQUENCE [LARGE SCALE GENOMIC DNA]</scope>
    <source>
        <strain>ATCC BAA-1014 / DSM 16622 / JCM 12645 / Bem</strain>
    </source>
</reference>
<evidence type="ECO:0000255" key="1">
    <source>
        <dbReference type="HAMAP-Rule" id="MF_00087"/>
    </source>
</evidence>
<accession>B5EBG7</accession>
<keyword id="KW-0521">NADP</keyword>
<keyword id="KW-0560">Oxidoreductase</keyword>
<keyword id="KW-0627">Porphyrin biosynthesis</keyword>
<keyword id="KW-1185">Reference proteome</keyword>
<dbReference type="EC" id="1.2.1.70" evidence="1"/>
<dbReference type="EMBL" id="CP001124">
    <property type="protein sequence ID" value="ACH37436.1"/>
    <property type="molecule type" value="Genomic_DNA"/>
</dbReference>
<dbReference type="RefSeq" id="WP_012528844.1">
    <property type="nucleotide sequence ID" value="NC_011146.1"/>
</dbReference>
<dbReference type="SMR" id="B5EBG7"/>
<dbReference type="STRING" id="404380.Gbem_0407"/>
<dbReference type="KEGG" id="gbm:Gbem_0407"/>
<dbReference type="eggNOG" id="COG0373">
    <property type="taxonomic scope" value="Bacteria"/>
</dbReference>
<dbReference type="HOGENOM" id="CLU_035113_2_2_7"/>
<dbReference type="OrthoDB" id="110209at2"/>
<dbReference type="UniPathway" id="UPA00251">
    <property type="reaction ID" value="UER00316"/>
</dbReference>
<dbReference type="Proteomes" id="UP000008825">
    <property type="component" value="Chromosome"/>
</dbReference>
<dbReference type="GO" id="GO:0008883">
    <property type="term" value="F:glutamyl-tRNA reductase activity"/>
    <property type="evidence" value="ECO:0007669"/>
    <property type="project" value="UniProtKB-UniRule"/>
</dbReference>
<dbReference type="GO" id="GO:0050661">
    <property type="term" value="F:NADP binding"/>
    <property type="evidence" value="ECO:0007669"/>
    <property type="project" value="InterPro"/>
</dbReference>
<dbReference type="GO" id="GO:0019353">
    <property type="term" value="P:protoporphyrinogen IX biosynthetic process from glutamate"/>
    <property type="evidence" value="ECO:0007669"/>
    <property type="project" value="TreeGrafter"/>
</dbReference>
<dbReference type="CDD" id="cd05213">
    <property type="entry name" value="NAD_bind_Glutamyl_tRNA_reduct"/>
    <property type="match status" value="1"/>
</dbReference>
<dbReference type="FunFam" id="3.30.460.30:FF:000001">
    <property type="entry name" value="Glutamyl-tRNA reductase"/>
    <property type="match status" value="1"/>
</dbReference>
<dbReference type="FunFam" id="3.40.50.720:FF:000031">
    <property type="entry name" value="Glutamyl-tRNA reductase"/>
    <property type="match status" value="1"/>
</dbReference>
<dbReference type="Gene3D" id="3.30.460.30">
    <property type="entry name" value="Glutamyl-tRNA reductase, N-terminal domain"/>
    <property type="match status" value="1"/>
</dbReference>
<dbReference type="Gene3D" id="3.40.50.720">
    <property type="entry name" value="NAD(P)-binding Rossmann-like Domain"/>
    <property type="match status" value="1"/>
</dbReference>
<dbReference type="HAMAP" id="MF_00087">
    <property type="entry name" value="Glu_tRNA_reductase"/>
    <property type="match status" value="1"/>
</dbReference>
<dbReference type="InterPro" id="IPR000343">
    <property type="entry name" value="4pyrrol_synth_GluRdtase"/>
</dbReference>
<dbReference type="InterPro" id="IPR015896">
    <property type="entry name" value="4pyrrol_synth_GluRdtase_dimer"/>
</dbReference>
<dbReference type="InterPro" id="IPR015895">
    <property type="entry name" value="4pyrrol_synth_GluRdtase_N"/>
</dbReference>
<dbReference type="InterPro" id="IPR018214">
    <property type="entry name" value="GluRdtase_CS"/>
</dbReference>
<dbReference type="InterPro" id="IPR036453">
    <property type="entry name" value="GluRdtase_dimer_dom_sf"/>
</dbReference>
<dbReference type="InterPro" id="IPR036343">
    <property type="entry name" value="GluRdtase_N_sf"/>
</dbReference>
<dbReference type="InterPro" id="IPR036291">
    <property type="entry name" value="NAD(P)-bd_dom_sf"/>
</dbReference>
<dbReference type="InterPro" id="IPR006151">
    <property type="entry name" value="Shikm_DH/Glu-tRNA_Rdtase"/>
</dbReference>
<dbReference type="NCBIfam" id="TIGR01035">
    <property type="entry name" value="hemA"/>
    <property type="match status" value="1"/>
</dbReference>
<dbReference type="NCBIfam" id="NF000744">
    <property type="entry name" value="PRK00045.1-3"/>
    <property type="match status" value="1"/>
</dbReference>
<dbReference type="PANTHER" id="PTHR43013">
    <property type="entry name" value="GLUTAMYL-TRNA REDUCTASE"/>
    <property type="match status" value="1"/>
</dbReference>
<dbReference type="PANTHER" id="PTHR43013:SF1">
    <property type="entry name" value="GLUTAMYL-TRNA REDUCTASE"/>
    <property type="match status" value="1"/>
</dbReference>
<dbReference type="Pfam" id="PF00745">
    <property type="entry name" value="GlutR_dimer"/>
    <property type="match status" value="1"/>
</dbReference>
<dbReference type="Pfam" id="PF05201">
    <property type="entry name" value="GlutR_N"/>
    <property type="match status" value="1"/>
</dbReference>
<dbReference type="Pfam" id="PF01488">
    <property type="entry name" value="Shikimate_DH"/>
    <property type="match status" value="1"/>
</dbReference>
<dbReference type="PIRSF" id="PIRSF000445">
    <property type="entry name" value="4pyrrol_synth_GluRdtase"/>
    <property type="match status" value="1"/>
</dbReference>
<dbReference type="SUPFAM" id="SSF69742">
    <property type="entry name" value="Glutamyl tRNA-reductase catalytic, N-terminal domain"/>
    <property type="match status" value="1"/>
</dbReference>
<dbReference type="SUPFAM" id="SSF69075">
    <property type="entry name" value="Glutamyl tRNA-reductase dimerization domain"/>
    <property type="match status" value="1"/>
</dbReference>
<dbReference type="SUPFAM" id="SSF51735">
    <property type="entry name" value="NAD(P)-binding Rossmann-fold domains"/>
    <property type="match status" value="1"/>
</dbReference>
<dbReference type="PROSITE" id="PS00747">
    <property type="entry name" value="GLUTR"/>
    <property type="match status" value="1"/>
</dbReference>